<feature type="chain" id="PRO_1000018582" description="N-(5'-phosphoribosyl)anthranilate isomerase">
    <location>
        <begin position="1"/>
        <end position="223"/>
    </location>
</feature>
<accession>Q89WE6</accession>
<gene>
    <name evidence="1" type="primary">trpF</name>
    <name type="ordered locus">blr0744</name>
</gene>
<organism>
    <name type="scientific">Bradyrhizobium diazoefficiens (strain JCM 10833 / BCRC 13528 / IAM 13628 / NBRC 14792 / USDA 110)</name>
    <dbReference type="NCBI Taxonomy" id="224911"/>
    <lineage>
        <taxon>Bacteria</taxon>
        <taxon>Pseudomonadati</taxon>
        <taxon>Pseudomonadota</taxon>
        <taxon>Alphaproteobacteria</taxon>
        <taxon>Hyphomicrobiales</taxon>
        <taxon>Nitrobacteraceae</taxon>
        <taxon>Bradyrhizobium</taxon>
    </lineage>
</organism>
<dbReference type="EC" id="5.3.1.24" evidence="1"/>
<dbReference type="EMBL" id="BA000040">
    <property type="protein sequence ID" value="BAC46009.1"/>
    <property type="molecule type" value="Genomic_DNA"/>
</dbReference>
<dbReference type="RefSeq" id="NP_767384.1">
    <property type="nucleotide sequence ID" value="NC_004463.1"/>
</dbReference>
<dbReference type="RefSeq" id="WP_011083568.1">
    <property type="nucleotide sequence ID" value="NC_004463.1"/>
</dbReference>
<dbReference type="SMR" id="Q89WE6"/>
<dbReference type="STRING" id="224911.AAV28_00570"/>
<dbReference type="EnsemblBacteria" id="BAC46009">
    <property type="protein sequence ID" value="BAC46009"/>
    <property type="gene ID" value="BAC46009"/>
</dbReference>
<dbReference type="GeneID" id="46488020"/>
<dbReference type="KEGG" id="bja:blr0744"/>
<dbReference type="PATRIC" id="fig|224911.44.peg.118"/>
<dbReference type="eggNOG" id="COG0135">
    <property type="taxonomic scope" value="Bacteria"/>
</dbReference>
<dbReference type="HOGENOM" id="CLU_076364_1_1_5"/>
<dbReference type="InParanoid" id="Q89WE6"/>
<dbReference type="OrthoDB" id="9796196at2"/>
<dbReference type="PhylomeDB" id="Q89WE6"/>
<dbReference type="UniPathway" id="UPA00035">
    <property type="reaction ID" value="UER00042"/>
</dbReference>
<dbReference type="Proteomes" id="UP000002526">
    <property type="component" value="Chromosome"/>
</dbReference>
<dbReference type="GO" id="GO:0004640">
    <property type="term" value="F:phosphoribosylanthranilate isomerase activity"/>
    <property type="evidence" value="ECO:0000318"/>
    <property type="project" value="GO_Central"/>
</dbReference>
<dbReference type="GO" id="GO:0000162">
    <property type="term" value="P:L-tryptophan biosynthetic process"/>
    <property type="evidence" value="ECO:0000318"/>
    <property type="project" value="GO_Central"/>
</dbReference>
<dbReference type="CDD" id="cd00405">
    <property type="entry name" value="PRAI"/>
    <property type="match status" value="1"/>
</dbReference>
<dbReference type="FunFam" id="3.20.20.70:FF:000447">
    <property type="entry name" value="N-(5'-phosphoribosyl)anthranilate isomerase"/>
    <property type="match status" value="1"/>
</dbReference>
<dbReference type="Gene3D" id="3.20.20.70">
    <property type="entry name" value="Aldolase class I"/>
    <property type="match status" value="1"/>
</dbReference>
<dbReference type="HAMAP" id="MF_00135">
    <property type="entry name" value="PRAI"/>
    <property type="match status" value="1"/>
</dbReference>
<dbReference type="InterPro" id="IPR013785">
    <property type="entry name" value="Aldolase_TIM"/>
</dbReference>
<dbReference type="InterPro" id="IPR001240">
    <property type="entry name" value="PRAI_dom"/>
</dbReference>
<dbReference type="InterPro" id="IPR011060">
    <property type="entry name" value="RibuloseP-bd_barrel"/>
</dbReference>
<dbReference type="InterPro" id="IPR044643">
    <property type="entry name" value="TrpF_fam"/>
</dbReference>
<dbReference type="NCBIfam" id="NF002295">
    <property type="entry name" value="PRK01222.1-1"/>
    <property type="match status" value="1"/>
</dbReference>
<dbReference type="PANTHER" id="PTHR42894">
    <property type="entry name" value="N-(5'-PHOSPHORIBOSYL)ANTHRANILATE ISOMERASE"/>
    <property type="match status" value="1"/>
</dbReference>
<dbReference type="PANTHER" id="PTHR42894:SF1">
    <property type="entry name" value="N-(5'-PHOSPHORIBOSYL)ANTHRANILATE ISOMERASE"/>
    <property type="match status" value="1"/>
</dbReference>
<dbReference type="Pfam" id="PF00697">
    <property type="entry name" value="PRAI"/>
    <property type="match status" value="1"/>
</dbReference>
<dbReference type="SUPFAM" id="SSF51366">
    <property type="entry name" value="Ribulose-phoshate binding barrel"/>
    <property type="match status" value="1"/>
</dbReference>
<evidence type="ECO:0000255" key="1">
    <source>
        <dbReference type="HAMAP-Rule" id="MF_00135"/>
    </source>
</evidence>
<proteinExistence type="inferred from homology"/>
<reference key="1">
    <citation type="journal article" date="2002" name="DNA Res.">
        <title>Complete genomic sequence of nitrogen-fixing symbiotic bacterium Bradyrhizobium japonicum USDA110.</title>
        <authorList>
            <person name="Kaneko T."/>
            <person name="Nakamura Y."/>
            <person name="Sato S."/>
            <person name="Minamisawa K."/>
            <person name="Uchiumi T."/>
            <person name="Sasamoto S."/>
            <person name="Watanabe A."/>
            <person name="Idesawa K."/>
            <person name="Iriguchi M."/>
            <person name="Kawashima K."/>
            <person name="Kohara M."/>
            <person name="Matsumoto M."/>
            <person name="Shimpo S."/>
            <person name="Tsuruoka H."/>
            <person name="Wada T."/>
            <person name="Yamada M."/>
            <person name="Tabata S."/>
        </authorList>
    </citation>
    <scope>NUCLEOTIDE SEQUENCE [LARGE SCALE GENOMIC DNA]</scope>
    <source>
        <strain>JCM 10833 / BCRC 13528 / IAM 13628 / NBRC 14792 / USDA 110</strain>
    </source>
</reference>
<sequence length="223" mass="23923">MSLLVKICGLSTRETLETALDAGADMVGFVFFPPSPRHLSLELGRDLGRQVNRRALKVALTVDADDATLDNIMDALSPDIFQLHGKETVARLRDIKQRFGRPVMKAVPVATSADLAVLPGYAAVADRILFDARAPKDATRPGGLGAPFDWHLLENLDLNLPYMVSGGLHADNVAEALRITRAGGVDVSSGVESAPGVKDPEMIKAFIRAARATQDASQELSVR</sequence>
<protein>
    <recommendedName>
        <fullName evidence="1">N-(5'-phosphoribosyl)anthranilate isomerase</fullName>
        <shortName evidence="1">PRAI</shortName>
        <ecNumber evidence="1">5.3.1.24</ecNumber>
    </recommendedName>
</protein>
<comment type="catalytic activity">
    <reaction evidence="1">
        <text>N-(5-phospho-beta-D-ribosyl)anthranilate = 1-(2-carboxyphenylamino)-1-deoxy-D-ribulose 5-phosphate</text>
        <dbReference type="Rhea" id="RHEA:21540"/>
        <dbReference type="ChEBI" id="CHEBI:18277"/>
        <dbReference type="ChEBI" id="CHEBI:58613"/>
        <dbReference type="EC" id="5.3.1.24"/>
    </reaction>
</comment>
<comment type="pathway">
    <text evidence="1">Amino-acid biosynthesis; L-tryptophan biosynthesis; L-tryptophan from chorismate: step 3/5.</text>
</comment>
<comment type="similarity">
    <text evidence="1">Belongs to the TrpF family.</text>
</comment>
<keyword id="KW-0028">Amino-acid biosynthesis</keyword>
<keyword id="KW-0057">Aromatic amino acid biosynthesis</keyword>
<keyword id="KW-0413">Isomerase</keyword>
<keyword id="KW-1185">Reference proteome</keyword>
<keyword id="KW-0822">Tryptophan biosynthesis</keyword>
<name>TRPF_BRADU</name>